<sequence>MKLIIGLGNPDPKYQKNRHNVGYMVVDKILENLRLKINKEKFSGIFVKTEEFIIAKPTTYMNLSGDFVKNISTYFKVSPNNILIIYDDMSYEVGQAAIKPKGGSNGQNGIKDILLKMNTEEIPRLKIGIGKNQEAAKHVLSDFTLEEFKIIDLVINQAAEAAISFLFNDIRIVMNSYNK</sequence>
<proteinExistence type="inferred from homology"/>
<evidence type="ECO:0000255" key="1">
    <source>
        <dbReference type="HAMAP-Rule" id="MF_00083"/>
    </source>
</evidence>
<evidence type="ECO:0000305" key="2"/>
<comment type="function">
    <text evidence="1">Hydrolyzes ribosome-free peptidyl-tRNAs (with 1 or more amino acids incorporated), which drop off the ribosome during protein synthesis, or as a result of ribosome stalling.</text>
</comment>
<comment type="function">
    <text evidence="1">Catalyzes the release of premature peptidyl moieties from peptidyl-tRNA molecules trapped in stalled 50S ribosomal subunits, and thus maintains levels of free tRNAs and 50S ribosomes.</text>
</comment>
<comment type="catalytic activity">
    <reaction evidence="1">
        <text>an N-acyl-L-alpha-aminoacyl-tRNA + H2O = an N-acyl-L-amino acid + a tRNA + H(+)</text>
        <dbReference type="Rhea" id="RHEA:54448"/>
        <dbReference type="Rhea" id="RHEA-COMP:10123"/>
        <dbReference type="Rhea" id="RHEA-COMP:13883"/>
        <dbReference type="ChEBI" id="CHEBI:15377"/>
        <dbReference type="ChEBI" id="CHEBI:15378"/>
        <dbReference type="ChEBI" id="CHEBI:59874"/>
        <dbReference type="ChEBI" id="CHEBI:78442"/>
        <dbReference type="ChEBI" id="CHEBI:138191"/>
        <dbReference type="EC" id="3.1.1.29"/>
    </reaction>
</comment>
<comment type="subunit">
    <text evidence="1">Monomer.</text>
</comment>
<comment type="subcellular location">
    <subcellularLocation>
        <location evidence="1">Cytoplasm</location>
    </subcellularLocation>
</comment>
<comment type="similarity">
    <text evidence="1">Belongs to the PTH family.</text>
</comment>
<comment type="sequence caution" evidence="2">
    <conflict type="erroneous initiation">
        <sequence resource="EMBL-CDS" id="AAT28027"/>
    </conflict>
    <text>Extended N-terminus.</text>
</comment>
<feature type="chain" id="PRO_0000187773" description="Peptidyl-tRNA hydrolase">
    <location>
        <begin position="1"/>
        <end position="179"/>
    </location>
</feature>
<feature type="active site" description="Proton acceptor" evidence="1">
    <location>
        <position position="19"/>
    </location>
</feature>
<feature type="binding site" evidence="1">
    <location>
        <position position="14"/>
    </location>
    <ligand>
        <name>tRNA</name>
        <dbReference type="ChEBI" id="CHEBI:17843"/>
    </ligand>
</feature>
<feature type="binding site" evidence="1">
    <location>
        <position position="60"/>
    </location>
    <ligand>
        <name>tRNA</name>
        <dbReference type="ChEBI" id="CHEBI:17843"/>
    </ligand>
</feature>
<feature type="binding site" evidence="1">
    <location>
        <position position="62"/>
    </location>
    <ligand>
        <name>tRNA</name>
        <dbReference type="ChEBI" id="CHEBI:17843"/>
    </ligand>
</feature>
<feature type="binding site" evidence="1">
    <location>
        <position position="108"/>
    </location>
    <ligand>
        <name>tRNA</name>
        <dbReference type="ChEBI" id="CHEBI:17843"/>
    </ligand>
</feature>
<feature type="site" description="Discriminates between blocked and unblocked aminoacyl-tRNA" evidence="1">
    <location>
        <position position="9"/>
    </location>
</feature>
<feature type="site" description="Stabilizes the basic form of H active site to accept a proton" evidence="1">
    <location>
        <position position="87"/>
    </location>
</feature>
<accession>Q6KHA3</accession>
<name>PTH_MYCM1</name>
<gene>
    <name evidence="1" type="primary">pth</name>
    <name type="ordered locus">MMOB5410</name>
</gene>
<dbReference type="EC" id="3.1.1.29" evidence="1"/>
<dbReference type="EMBL" id="AE017308">
    <property type="protein sequence ID" value="AAT28027.1"/>
    <property type="status" value="ALT_INIT"/>
    <property type="molecule type" value="Genomic_DNA"/>
</dbReference>
<dbReference type="RefSeq" id="WP_041362970.1">
    <property type="nucleotide sequence ID" value="NC_006908.1"/>
</dbReference>
<dbReference type="SMR" id="Q6KHA3"/>
<dbReference type="STRING" id="267748.MMOB5410"/>
<dbReference type="KEGG" id="mmo:MMOB5410"/>
<dbReference type="eggNOG" id="COG0193">
    <property type="taxonomic scope" value="Bacteria"/>
</dbReference>
<dbReference type="HOGENOM" id="CLU_062456_4_1_14"/>
<dbReference type="OrthoDB" id="9800507at2"/>
<dbReference type="Proteomes" id="UP000009072">
    <property type="component" value="Chromosome"/>
</dbReference>
<dbReference type="GO" id="GO:0005737">
    <property type="term" value="C:cytoplasm"/>
    <property type="evidence" value="ECO:0007669"/>
    <property type="project" value="UniProtKB-SubCell"/>
</dbReference>
<dbReference type="GO" id="GO:0004045">
    <property type="term" value="F:peptidyl-tRNA hydrolase activity"/>
    <property type="evidence" value="ECO:0007669"/>
    <property type="project" value="UniProtKB-UniRule"/>
</dbReference>
<dbReference type="GO" id="GO:0000049">
    <property type="term" value="F:tRNA binding"/>
    <property type="evidence" value="ECO:0007669"/>
    <property type="project" value="UniProtKB-UniRule"/>
</dbReference>
<dbReference type="GO" id="GO:0006515">
    <property type="term" value="P:protein quality control for misfolded or incompletely synthesized proteins"/>
    <property type="evidence" value="ECO:0007669"/>
    <property type="project" value="UniProtKB-UniRule"/>
</dbReference>
<dbReference type="GO" id="GO:0072344">
    <property type="term" value="P:rescue of stalled ribosome"/>
    <property type="evidence" value="ECO:0007669"/>
    <property type="project" value="UniProtKB-UniRule"/>
</dbReference>
<dbReference type="CDD" id="cd00462">
    <property type="entry name" value="PTH"/>
    <property type="match status" value="1"/>
</dbReference>
<dbReference type="Gene3D" id="3.40.50.1470">
    <property type="entry name" value="Peptidyl-tRNA hydrolase"/>
    <property type="match status" value="1"/>
</dbReference>
<dbReference type="HAMAP" id="MF_00083">
    <property type="entry name" value="Pept_tRNA_hydro_bact"/>
    <property type="match status" value="1"/>
</dbReference>
<dbReference type="InterPro" id="IPR001328">
    <property type="entry name" value="Pept_tRNA_hydro"/>
</dbReference>
<dbReference type="InterPro" id="IPR018171">
    <property type="entry name" value="Pept_tRNA_hydro_CS"/>
</dbReference>
<dbReference type="InterPro" id="IPR036416">
    <property type="entry name" value="Pept_tRNA_hydro_sf"/>
</dbReference>
<dbReference type="NCBIfam" id="TIGR00447">
    <property type="entry name" value="pth"/>
    <property type="match status" value="1"/>
</dbReference>
<dbReference type="PANTHER" id="PTHR17224">
    <property type="entry name" value="PEPTIDYL-TRNA HYDROLASE"/>
    <property type="match status" value="1"/>
</dbReference>
<dbReference type="PANTHER" id="PTHR17224:SF1">
    <property type="entry name" value="PEPTIDYL-TRNA HYDROLASE"/>
    <property type="match status" value="1"/>
</dbReference>
<dbReference type="Pfam" id="PF01195">
    <property type="entry name" value="Pept_tRNA_hydro"/>
    <property type="match status" value="1"/>
</dbReference>
<dbReference type="SUPFAM" id="SSF53178">
    <property type="entry name" value="Peptidyl-tRNA hydrolase-like"/>
    <property type="match status" value="1"/>
</dbReference>
<dbReference type="PROSITE" id="PS01195">
    <property type="entry name" value="PEPT_TRNA_HYDROL_1"/>
    <property type="match status" value="1"/>
</dbReference>
<protein>
    <recommendedName>
        <fullName evidence="1">Peptidyl-tRNA hydrolase</fullName>
        <shortName evidence="1">Pth</shortName>
        <ecNumber evidence="1">3.1.1.29</ecNumber>
    </recommendedName>
</protein>
<reference key="1">
    <citation type="journal article" date="2004" name="Genome Res.">
        <title>The complete genome and proteome of Mycoplasma mobile.</title>
        <authorList>
            <person name="Jaffe J.D."/>
            <person name="Stange-Thomann N."/>
            <person name="Smith C."/>
            <person name="DeCaprio D."/>
            <person name="Fisher S."/>
            <person name="Butler J."/>
            <person name="Calvo S."/>
            <person name="Elkins T."/>
            <person name="FitzGerald M.G."/>
            <person name="Hafez N."/>
            <person name="Kodira C.D."/>
            <person name="Major J."/>
            <person name="Wang S."/>
            <person name="Wilkinson J."/>
            <person name="Nicol R."/>
            <person name="Nusbaum C."/>
            <person name="Birren B."/>
            <person name="Berg H.C."/>
            <person name="Church G.M."/>
        </authorList>
    </citation>
    <scope>NUCLEOTIDE SEQUENCE [LARGE SCALE GENOMIC DNA]</scope>
    <source>
        <strain>ATCC 43663 / NCTC 11711 / 163 K</strain>
    </source>
</reference>
<keyword id="KW-0963">Cytoplasm</keyword>
<keyword id="KW-0378">Hydrolase</keyword>
<keyword id="KW-1185">Reference proteome</keyword>
<keyword id="KW-0694">RNA-binding</keyword>
<keyword id="KW-0820">tRNA-binding</keyword>
<organism>
    <name type="scientific">Mycoplasma mobile (strain ATCC 43663 / 163K / NCTC 11711)</name>
    <name type="common">Mesomycoplasma mobile</name>
    <dbReference type="NCBI Taxonomy" id="267748"/>
    <lineage>
        <taxon>Bacteria</taxon>
        <taxon>Bacillati</taxon>
        <taxon>Mycoplasmatota</taxon>
        <taxon>Mycoplasmoidales</taxon>
        <taxon>Metamycoplasmataceae</taxon>
        <taxon>Mesomycoplasma</taxon>
    </lineage>
</organism>